<name>ROB2_RHIRH</name>
<sequence length="262" mass="30097">MAPRSLFLQRFQPRDLTKAWNQLNLFDEIQFAFLIYSQVYSKTLMDFQKRWAQGVLDLEENAPPVVILKQLAHLLKNKVCYHPPMLVDHPDLARENDRHVFVYLSREKMQKVLEEKSITFGLEAVLATTMQPYRSDLVLQEMVRAHNIAWPHRRVEEPDLEGFIAIFASTLFIHLLELKVTNVYGREVACTFFVRQGTGNRSYDVIACGITQFTKNAGVMPRPAVPSPEPDLTLRLSGPNQKREEGDMKPAIVNLKKETSAT</sequence>
<gene>
    <name type="primary">rolB</name>
    <name type="ORF">riorf15</name>
</gene>
<organism>
    <name type="scientific">Rhizobium rhizogenes</name>
    <name type="common">Agrobacterium rhizogenes</name>
    <dbReference type="NCBI Taxonomy" id="359"/>
    <lineage>
        <taxon>Bacteria</taxon>
        <taxon>Pseudomonadati</taxon>
        <taxon>Pseudomonadota</taxon>
        <taxon>Alphaproteobacteria</taxon>
        <taxon>Hyphomicrobiales</taxon>
        <taxon>Rhizobiaceae</taxon>
        <taxon>Rhizobium/Agrobacterium group</taxon>
        <taxon>Rhizobium</taxon>
    </lineage>
</organism>
<dbReference type="EC" id="3.1.3.48"/>
<dbReference type="EMBL" id="X64255">
    <property type="protein sequence ID" value="CAA45540.1"/>
    <property type="molecule type" value="Genomic_DNA"/>
</dbReference>
<dbReference type="EMBL" id="AB006689">
    <property type="protein sequence ID" value="BAA22335.1"/>
    <property type="status" value="ALT_INIT"/>
    <property type="molecule type" value="Genomic_DNA"/>
</dbReference>
<dbReference type="EMBL" id="AP002086">
    <property type="protein sequence ID" value="BAB16134.1"/>
    <property type="status" value="ALT_INIT"/>
    <property type="molecule type" value="Genomic_DNA"/>
</dbReference>
<dbReference type="PIR" id="JC2106">
    <property type="entry name" value="JC2106"/>
</dbReference>
<dbReference type="RefSeq" id="NP_066596.1">
    <property type="nucleotide sequence ID" value="NC_002575.1"/>
</dbReference>
<dbReference type="RefSeq" id="WP_172690492.1">
    <property type="nucleotide sequence ID" value="NC_002575.1"/>
</dbReference>
<dbReference type="GO" id="GO:0004725">
    <property type="term" value="F:protein tyrosine phosphatase activity"/>
    <property type="evidence" value="ECO:0007669"/>
    <property type="project" value="UniProtKB-EC"/>
</dbReference>
<dbReference type="InterPro" id="IPR006064">
    <property type="entry name" value="Glycosidase"/>
</dbReference>
<dbReference type="Pfam" id="PF02027">
    <property type="entry name" value="RolB_RolC"/>
    <property type="match status" value="1"/>
</dbReference>
<feature type="chain" id="PRO_0000097392" description="Protein-tyrosine phosphatase RolB">
    <location>
        <begin position="1"/>
        <end position="262"/>
    </location>
</feature>
<feature type="region of interest" description="Disordered" evidence="1">
    <location>
        <begin position="221"/>
        <end position="262"/>
    </location>
</feature>
<protein>
    <recommendedName>
        <fullName>Protein-tyrosine phosphatase RolB</fullName>
        <shortName>ROL B protein</shortName>
        <ecNumber>3.1.3.48</ecNumber>
    </recommendedName>
</protein>
<geneLocation type="plasmid">
    <name>pRi1724</name>
</geneLocation>
<evidence type="ECO:0000256" key="1">
    <source>
        <dbReference type="SAM" id="MobiDB-lite"/>
    </source>
</evidence>
<evidence type="ECO:0000305" key="2"/>
<proteinExistence type="predicted"/>
<comment type="function">
    <text>Induces differentiation and growth of neoplastic roots (hairy roots). Seems to function as a tyrosine phosphatase.</text>
</comment>
<comment type="catalytic activity">
    <reaction>
        <text>O-phospho-L-tyrosyl-[protein] + H2O = L-tyrosyl-[protein] + phosphate</text>
        <dbReference type="Rhea" id="RHEA:10684"/>
        <dbReference type="Rhea" id="RHEA-COMP:10136"/>
        <dbReference type="Rhea" id="RHEA-COMP:20101"/>
        <dbReference type="ChEBI" id="CHEBI:15377"/>
        <dbReference type="ChEBI" id="CHEBI:43474"/>
        <dbReference type="ChEBI" id="CHEBI:46858"/>
        <dbReference type="ChEBI" id="CHEBI:61978"/>
        <dbReference type="EC" id="3.1.3.48"/>
    </reaction>
</comment>
<comment type="sequence caution" evidence="2">
    <conflict type="erroneous initiation">
        <sequence resource="EMBL-CDS" id="BAA22335"/>
    </conflict>
</comment>
<comment type="sequence caution" evidence="2">
    <conflict type="erroneous initiation">
        <sequence resource="EMBL-CDS" id="BAB16134"/>
    </conflict>
</comment>
<keyword id="KW-0378">Hydrolase</keyword>
<keyword id="KW-0614">Plasmid</keyword>
<keyword id="KW-0904">Protein phosphatase</keyword>
<reference key="1">
    <citation type="journal article" date="1994" name="Plant Physiol.">
        <title>Root-inducing region of mikimopine type Ri plasmid pRi1724.</title>
        <authorList>
            <person name="Kiyokawa S."/>
            <person name="Kobayashi K."/>
            <person name="Kikuchi Y."/>
            <person name="Kamada H."/>
            <person name="Harada H."/>
        </authorList>
    </citation>
    <scope>NUCLEOTIDE SEQUENCE [GENOMIC DNA]</scope>
    <source>
        <strain>MAFF03-01724</strain>
    </source>
</reference>
<reference key="2">
    <citation type="journal article" date="1994" name="Biosci. Biotechnol. Biochem.">
        <title>Nucleotide sequence of the rol region of the mikimopine-type root-inducing plasmid pRi1724.</title>
        <authorList>
            <person name="Tanaka N."/>
            <person name="Ikeda T."/>
            <person name="Oka A."/>
        </authorList>
    </citation>
    <scope>NUCLEOTIDE SEQUENCE [GENOMIC DNA]</scope>
    <source>
        <strain>MAFF03-01724</strain>
    </source>
</reference>
<reference key="3">
    <citation type="journal article" date="2001" name="J. Mol. Biol.">
        <title>The complete nucleotide sequence of a plant root-inducing (Ri) plasmid indicates its chimeric structure and evolutionary relationship between tumor-inducing (Ti) and symbiotic (Sym) plasmids in Rhizobiaceae.</title>
        <authorList>
            <person name="Moriguchi K."/>
            <person name="Maeda Y."/>
            <person name="Satou M."/>
            <person name="Hardayani N.S.N."/>
            <person name="Kataoka M."/>
            <person name="Tanaka N."/>
            <person name="Yoshida K."/>
        </authorList>
    </citation>
    <scope>NUCLEOTIDE SEQUENCE [GENOMIC DNA]</scope>
    <source>
        <strain>MAFF03-01724</strain>
    </source>
</reference>
<accession>P49409</accession>
<accession>Q9F5H3</accession>